<evidence type="ECO:0000255" key="1">
    <source>
        <dbReference type="HAMAP-Rule" id="MF_00412"/>
    </source>
</evidence>
<dbReference type="EC" id="1.2.1.41" evidence="1"/>
<dbReference type="EMBL" id="BA000037">
    <property type="protein sequence ID" value="BAC93623.1"/>
    <property type="molecule type" value="Genomic_DNA"/>
</dbReference>
<dbReference type="SMR" id="Q7MN58"/>
<dbReference type="STRING" id="672.VV93_v1c07980"/>
<dbReference type="KEGG" id="vvy:VV0859"/>
<dbReference type="PATRIC" id="fig|196600.6.peg.865"/>
<dbReference type="eggNOG" id="COG0014">
    <property type="taxonomic scope" value="Bacteria"/>
</dbReference>
<dbReference type="HOGENOM" id="CLU_030231_0_0_6"/>
<dbReference type="UniPathway" id="UPA00098">
    <property type="reaction ID" value="UER00360"/>
</dbReference>
<dbReference type="Proteomes" id="UP000002675">
    <property type="component" value="Chromosome I"/>
</dbReference>
<dbReference type="GO" id="GO:0005737">
    <property type="term" value="C:cytoplasm"/>
    <property type="evidence" value="ECO:0007669"/>
    <property type="project" value="UniProtKB-SubCell"/>
</dbReference>
<dbReference type="GO" id="GO:0004350">
    <property type="term" value="F:glutamate-5-semialdehyde dehydrogenase activity"/>
    <property type="evidence" value="ECO:0007669"/>
    <property type="project" value="UniProtKB-UniRule"/>
</dbReference>
<dbReference type="GO" id="GO:0050661">
    <property type="term" value="F:NADP binding"/>
    <property type="evidence" value="ECO:0007669"/>
    <property type="project" value="InterPro"/>
</dbReference>
<dbReference type="GO" id="GO:0055129">
    <property type="term" value="P:L-proline biosynthetic process"/>
    <property type="evidence" value="ECO:0007669"/>
    <property type="project" value="UniProtKB-UniRule"/>
</dbReference>
<dbReference type="CDD" id="cd07079">
    <property type="entry name" value="ALDH_F18-19_ProA-GPR"/>
    <property type="match status" value="1"/>
</dbReference>
<dbReference type="FunFam" id="3.40.309.10:FF:000028">
    <property type="entry name" value="Gamma-glutamyl phosphate reductase"/>
    <property type="match status" value="1"/>
</dbReference>
<dbReference type="Gene3D" id="3.40.605.10">
    <property type="entry name" value="Aldehyde Dehydrogenase, Chain A, domain 1"/>
    <property type="match status" value="1"/>
</dbReference>
<dbReference type="Gene3D" id="3.40.309.10">
    <property type="entry name" value="Aldehyde Dehydrogenase, Chain A, domain 2"/>
    <property type="match status" value="1"/>
</dbReference>
<dbReference type="HAMAP" id="MF_00412">
    <property type="entry name" value="ProA"/>
    <property type="match status" value="1"/>
</dbReference>
<dbReference type="InterPro" id="IPR016161">
    <property type="entry name" value="Ald_DH/histidinol_DH"/>
</dbReference>
<dbReference type="InterPro" id="IPR016163">
    <property type="entry name" value="Ald_DH_C"/>
</dbReference>
<dbReference type="InterPro" id="IPR016162">
    <property type="entry name" value="Ald_DH_N"/>
</dbReference>
<dbReference type="InterPro" id="IPR015590">
    <property type="entry name" value="Aldehyde_DH_dom"/>
</dbReference>
<dbReference type="InterPro" id="IPR020593">
    <property type="entry name" value="G-glutamylP_reductase_CS"/>
</dbReference>
<dbReference type="InterPro" id="IPR012134">
    <property type="entry name" value="Glu-5-SA_DH"/>
</dbReference>
<dbReference type="InterPro" id="IPR000965">
    <property type="entry name" value="GPR_dom"/>
</dbReference>
<dbReference type="NCBIfam" id="NF001221">
    <property type="entry name" value="PRK00197.1"/>
    <property type="match status" value="1"/>
</dbReference>
<dbReference type="NCBIfam" id="TIGR00407">
    <property type="entry name" value="proA"/>
    <property type="match status" value="1"/>
</dbReference>
<dbReference type="PANTHER" id="PTHR11063:SF8">
    <property type="entry name" value="DELTA-1-PYRROLINE-5-CARBOXYLATE SYNTHASE"/>
    <property type="match status" value="1"/>
</dbReference>
<dbReference type="PANTHER" id="PTHR11063">
    <property type="entry name" value="GLUTAMATE SEMIALDEHYDE DEHYDROGENASE"/>
    <property type="match status" value="1"/>
</dbReference>
<dbReference type="Pfam" id="PF00171">
    <property type="entry name" value="Aldedh"/>
    <property type="match status" value="1"/>
</dbReference>
<dbReference type="PIRSF" id="PIRSF000151">
    <property type="entry name" value="GPR"/>
    <property type="match status" value="1"/>
</dbReference>
<dbReference type="SUPFAM" id="SSF53720">
    <property type="entry name" value="ALDH-like"/>
    <property type="match status" value="1"/>
</dbReference>
<dbReference type="PROSITE" id="PS01223">
    <property type="entry name" value="PROA"/>
    <property type="match status" value="1"/>
</dbReference>
<keyword id="KW-0028">Amino-acid biosynthesis</keyword>
<keyword id="KW-0963">Cytoplasm</keyword>
<keyword id="KW-0521">NADP</keyword>
<keyword id="KW-0560">Oxidoreductase</keyword>
<keyword id="KW-0641">Proline biosynthesis</keyword>
<organism>
    <name type="scientific">Vibrio vulnificus (strain YJ016)</name>
    <dbReference type="NCBI Taxonomy" id="196600"/>
    <lineage>
        <taxon>Bacteria</taxon>
        <taxon>Pseudomonadati</taxon>
        <taxon>Pseudomonadota</taxon>
        <taxon>Gammaproteobacteria</taxon>
        <taxon>Vibrionales</taxon>
        <taxon>Vibrionaceae</taxon>
        <taxon>Vibrio</taxon>
    </lineage>
</organism>
<sequence length="416" mass="44773">MDLITLGKAAKDAAFQLATASTAQKNKALAIIADELEANAADILAANSKDIELGRQAGLSEAMLDRLLLNESRLNGIANDVRNVISLTDPVGSEIDSKVLENGMQLSRRRVPLGVVGVIYEARPNVTIDIAALCLKTGNASILRGGKETFFSNMELVKVIQSALAKAGLPAASVQYIEKPDRELVTQLLKLDDYVDMIIPRGGAGLHKMCKENSTIPVIIGGFGISHIFVDETADLAKSVDVVENAKAQRPSACNALDTLLVHERIAEQFLPMLVAKLNGKVTFVVEPKAKAYMTKAEQVRDASEGDFDTEWLSYTLGVKVVADVQEAIDHMREHNASHSDAIMTNHLQNAELFINSAGSAAVYVNASTRFTDGAQFGLGAEVAVSTQKLHARGPMGLEELTSYKWVGKANYLSRA</sequence>
<protein>
    <recommendedName>
        <fullName evidence="1">Gamma-glutamyl phosphate reductase</fullName>
        <shortName evidence="1">GPR</shortName>
        <ecNumber evidence="1">1.2.1.41</ecNumber>
    </recommendedName>
    <alternativeName>
        <fullName evidence="1">Glutamate-5-semialdehyde dehydrogenase</fullName>
    </alternativeName>
    <alternativeName>
        <fullName evidence="1">Glutamyl-gamma-semialdehyde dehydrogenase</fullName>
        <shortName evidence="1">GSA dehydrogenase</shortName>
    </alternativeName>
</protein>
<comment type="function">
    <text evidence="1">Catalyzes the NADPH-dependent reduction of L-glutamate 5-phosphate into L-glutamate 5-semialdehyde and phosphate. The product spontaneously undergoes cyclization to form 1-pyrroline-5-carboxylate.</text>
</comment>
<comment type="catalytic activity">
    <reaction evidence="1">
        <text>L-glutamate 5-semialdehyde + phosphate + NADP(+) = L-glutamyl 5-phosphate + NADPH + H(+)</text>
        <dbReference type="Rhea" id="RHEA:19541"/>
        <dbReference type="ChEBI" id="CHEBI:15378"/>
        <dbReference type="ChEBI" id="CHEBI:43474"/>
        <dbReference type="ChEBI" id="CHEBI:57783"/>
        <dbReference type="ChEBI" id="CHEBI:58066"/>
        <dbReference type="ChEBI" id="CHEBI:58274"/>
        <dbReference type="ChEBI" id="CHEBI:58349"/>
        <dbReference type="EC" id="1.2.1.41"/>
    </reaction>
</comment>
<comment type="pathway">
    <text evidence="1">Amino-acid biosynthesis; L-proline biosynthesis; L-glutamate 5-semialdehyde from L-glutamate: step 2/2.</text>
</comment>
<comment type="subcellular location">
    <subcellularLocation>
        <location evidence="1">Cytoplasm</location>
    </subcellularLocation>
</comment>
<comment type="similarity">
    <text evidence="1">Belongs to the gamma-glutamyl phosphate reductase family.</text>
</comment>
<reference key="1">
    <citation type="journal article" date="2003" name="Genome Res.">
        <title>Comparative genome analysis of Vibrio vulnificus, a marine pathogen.</title>
        <authorList>
            <person name="Chen C.-Y."/>
            <person name="Wu K.-M."/>
            <person name="Chang Y.-C."/>
            <person name="Chang C.-H."/>
            <person name="Tsai H.-C."/>
            <person name="Liao T.-L."/>
            <person name="Liu Y.-M."/>
            <person name="Chen H.-J."/>
            <person name="Shen A.B.-T."/>
            <person name="Li J.-C."/>
            <person name="Su T.-L."/>
            <person name="Shao C.-P."/>
            <person name="Lee C.-T."/>
            <person name="Hor L.-I."/>
            <person name="Tsai S.-F."/>
        </authorList>
    </citation>
    <scope>NUCLEOTIDE SEQUENCE [LARGE SCALE GENOMIC DNA]</scope>
    <source>
        <strain>YJ016</strain>
    </source>
</reference>
<accession>Q7MN58</accession>
<name>PROA_VIBVY</name>
<gene>
    <name evidence="1" type="primary">proA</name>
    <name type="ordered locus">VV0859</name>
</gene>
<feature type="chain" id="PRO_0000189811" description="Gamma-glutamyl phosphate reductase">
    <location>
        <begin position="1"/>
        <end position="416"/>
    </location>
</feature>
<proteinExistence type="inferred from homology"/>